<reference key="1">
    <citation type="journal article" date="2001" name="Lancet">
        <title>Whole genome sequencing of meticillin-resistant Staphylococcus aureus.</title>
        <authorList>
            <person name="Kuroda M."/>
            <person name="Ohta T."/>
            <person name="Uchiyama I."/>
            <person name="Baba T."/>
            <person name="Yuzawa H."/>
            <person name="Kobayashi I."/>
            <person name="Cui L."/>
            <person name="Oguchi A."/>
            <person name="Aoki K."/>
            <person name="Nagai Y."/>
            <person name="Lian J.-Q."/>
            <person name="Ito T."/>
            <person name="Kanamori M."/>
            <person name="Matsumaru H."/>
            <person name="Maruyama A."/>
            <person name="Murakami H."/>
            <person name="Hosoyama A."/>
            <person name="Mizutani-Ui Y."/>
            <person name="Takahashi N.K."/>
            <person name="Sawano T."/>
            <person name="Inoue R."/>
            <person name="Kaito C."/>
            <person name="Sekimizu K."/>
            <person name="Hirakawa H."/>
            <person name="Kuhara S."/>
            <person name="Goto S."/>
            <person name="Yabuzaki J."/>
            <person name="Kanehisa M."/>
            <person name="Yamashita A."/>
            <person name="Oshima K."/>
            <person name="Furuya K."/>
            <person name="Yoshino C."/>
            <person name="Shiba T."/>
            <person name="Hattori M."/>
            <person name="Ogasawara N."/>
            <person name="Hayashi H."/>
            <person name="Hiramatsu K."/>
        </authorList>
    </citation>
    <scope>NUCLEOTIDE SEQUENCE [LARGE SCALE GENOMIC DNA]</scope>
    <source>
        <strain>N315</strain>
    </source>
</reference>
<protein>
    <recommendedName>
        <fullName>Poly-beta-1,6-N-acetyl-D-glucosamine synthesis protein IcaD</fullName>
        <shortName>PGA synthesis protein IcaD</shortName>
        <shortName>Poly-beta-1,6-GlcNAc synthesis protein IcaD</shortName>
    </recommendedName>
    <alternativeName>
        <fullName>Biofilm polysaccharide intercellular adhesin synthesis protein IcaD</fullName>
        <shortName>Biofilm PIA synthesis protein IcaD</shortName>
    </alternativeName>
    <alternativeName>
        <fullName>Intercellular adhesion protein D</fullName>
    </alternativeName>
</protein>
<proteinExistence type="inferred from homology"/>
<name>ICAD_STAAN</name>
<organism>
    <name type="scientific">Staphylococcus aureus (strain N315)</name>
    <dbReference type="NCBI Taxonomy" id="158879"/>
    <lineage>
        <taxon>Bacteria</taxon>
        <taxon>Bacillati</taxon>
        <taxon>Bacillota</taxon>
        <taxon>Bacilli</taxon>
        <taxon>Bacillales</taxon>
        <taxon>Staphylococcaceae</taxon>
        <taxon>Staphylococcus</taxon>
    </lineage>
</organism>
<accession>Q7A350</accession>
<comment type="function">
    <text evidence="1">Necessary for the synthesis of poly-beta-1,6-N-acetyl-D-glucosamine (PNAG, also referred to as PIA), a biofilm adhesin polysaccharide. Is required for full IcaA N-acetylglucosaminyltransferase activity (By similarity).</text>
</comment>
<comment type="subcellular location">
    <subcellularLocation>
        <location evidence="1">Cell membrane</location>
        <topology evidence="1">Multi-pass membrane protein</topology>
    </subcellularLocation>
</comment>
<comment type="similarity">
    <text evidence="3">Belongs to the IcaD family.</text>
</comment>
<feature type="chain" id="PRO_0000084136" description="Poly-beta-1,6-N-acetyl-D-glucosamine synthesis protein IcaD">
    <location>
        <begin position="1"/>
        <end position="101"/>
    </location>
</feature>
<feature type="transmembrane region" description="Helical" evidence="2">
    <location>
        <begin position="24"/>
        <end position="46"/>
    </location>
</feature>
<feature type="transmembrane region" description="Helical" evidence="2">
    <location>
        <begin position="71"/>
        <end position="93"/>
    </location>
</feature>
<keyword id="KW-1003">Cell membrane</keyword>
<keyword id="KW-0472">Membrane</keyword>
<keyword id="KW-0812">Transmembrane</keyword>
<keyword id="KW-1133">Transmembrane helix</keyword>
<sequence>MVKPRQREYPTLKSSLNIVRETALIAISCVFWIYCLVVLLVYIGTIFEIHDESINTIRVALNIENTEILDIFETMGIFAIIIFVFFTISILIQKWQRGRES</sequence>
<dbReference type="EMBL" id="BA000018">
    <property type="protein sequence ID" value="BAB43765.1"/>
    <property type="molecule type" value="Genomic_DNA"/>
</dbReference>
<dbReference type="RefSeq" id="WP_000240580.1">
    <property type="nucleotide sequence ID" value="NC_002745.2"/>
</dbReference>
<dbReference type="EnsemblBacteria" id="BAB43765">
    <property type="protein sequence ID" value="BAB43765"/>
    <property type="gene ID" value="BAB43765"/>
</dbReference>
<dbReference type="KEGG" id="sau:SA2460"/>
<dbReference type="HOGENOM" id="CLU_2289916_0_0_9"/>
<dbReference type="GO" id="GO:0005886">
    <property type="term" value="C:plasma membrane"/>
    <property type="evidence" value="ECO:0007669"/>
    <property type="project" value="UniProtKB-SubCell"/>
</dbReference>
<dbReference type="InterPro" id="IPR020510">
    <property type="entry name" value="IcaD"/>
</dbReference>
<dbReference type="NCBIfam" id="TIGR03932">
    <property type="entry name" value="PIA_icaD"/>
    <property type="match status" value="1"/>
</dbReference>
<gene>
    <name type="primary">icaD</name>
    <name type="ordered locus">SA2460</name>
</gene>
<evidence type="ECO:0000250" key="1"/>
<evidence type="ECO:0000255" key="2"/>
<evidence type="ECO:0000305" key="3"/>